<keyword id="KW-0004">4Fe-4S</keyword>
<keyword id="KW-0963">Cytoplasm</keyword>
<keyword id="KW-0408">Iron</keyword>
<keyword id="KW-0411">Iron-sulfur</keyword>
<keyword id="KW-0479">Metal-binding</keyword>
<keyword id="KW-1185">Reference proteome</keyword>
<keyword id="KW-0949">S-adenosyl-L-methionine</keyword>
<keyword id="KW-0808">Transferase</keyword>
<keyword id="KW-0819">tRNA processing</keyword>
<evidence type="ECO:0000255" key="1">
    <source>
        <dbReference type="HAMAP-Rule" id="MF_01864"/>
    </source>
</evidence>
<evidence type="ECO:0000255" key="2">
    <source>
        <dbReference type="PROSITE-ProRule" id="PRU01266"/>
    </source>
</evidence>
<reference key="1">
    <citation type="journal article" date="2008" name="DNA Res.">
        <title>Complete genome sequence of Finegoldia magna, an anaerobic opportunistic pathogen.</title>
        <authorList>
            <person name="Goto T."/>
            <person name="Yamashita A."/>
            <person name="Hirakawa H."/>
            <person name="Matsutani M."/>
            <person name="Todo K."/>
            <person name="Ohshima K."/>
            <person name="Toh H."/>
            <person name="Miyamoto K."/>
            <person name="Kuhara S."/>
            <person name="Hattori M."/>
            <person name="Shimizu T."/>
            <person name="Akimoto S."/>
        </authorList>
    </citation>
    <scope>NUCLEOTIDE SEQUENCE [LARGE SCALE GENOMIC DNA]</scope>
    <source>
        <strain>ATCC 29328 / DSM 20472 / WAL 2508</strain>
    </source>
</reference>
<feature type="chain" id="PRO_0000374299" description="tRNA-2-methylthio-N(6)-dimethylallyladenosine synthase">
    <location>
        <begin position="1"/>
        <end position="461"/>
    </location>
</feature>
<feature type="domain" description="MTTase N-terminal" evidence="1">
    <location>
        <begin position="25"/>
        <end position="143"/>
    </location>
</feature>
<feature type="domain" description="Radical SAM core" evidence="2">
    <location>
        <begin position="165"/>
        <end position="395"/>
    </location>
</feature>
<feature type="domain" description="TRAM" evidence="1">
    <location>
        <begin position="398"/>
        <end position="461"/>
    </location>
</feature>
<feature type="binding site" evidence="1">
    <location>
        <position position="34"/>
    </location>
    <ligand>
        <name>[4Fe-4S] cluster</name>
        <dbReference type="ChEBI" id="CHEBI:49883"/>
        <label>1</label>
    </ligand>
</feature>
<feature type="binding site" evidence="1">
    <location>
        <position position="70"/>
    </location>
    <ligand>
        <name>[4Fe-4S] cluster</name>
        <dbReference type="ChEBI" id="CHEBI:49883"/>
        <label>1</label>
    </ligand>
</feature>
<feature type="binding site" evidence="1">
    <location>
        <position position="104"/>
    </location>
    <ligand>
        <name>[4Fe-4S] cluster</name>
        <dbReference type="ChEBI" id="CHEBI:49883"/>
        <label>1</label>
    </ligand>
</feature>
<feature type="binding site" evidence="1">
    <location>
        <position position="179"/>
    </location>
    <ligand>
        <name>[4Fe-4S] cluster</name>
        <dbReference type="ChEBI" id="CHEBI:49883"/>
        <label>2</label>
        <note>4Fe-4S-S-AdoMet</note>
    </ligand>
</feature>
<feature type="binding site" evidence="1">
    <location>
        <position position="183"/>
    </location>
    <ligand>
        <name>[4Fe-4S] cluster</name>
        <dbReference type="ChEBI" id="CHEBI:49883"/>
        <label>2</label>
        <note>4Fe-4S-S-AdoMet</note>
    </ligand>
</feature>
<feature type="binding site" evidence="1">
    <location>
        <position position="186"/>
    </location>
    <ligand>
        <name>[4Fe-4S] cluster</name>
        <dbReference type="ChEBI" id="CHEBI:49883"/>
        <label>2</label>
        <note>4Fe-4S-S-AdoMet</note>
    </ligand>
</feature>
<proteinExistence type="inferred from homology"/>
<dbReference type="EC" id="2.8.4.3" evidence="1"/>
<dbReference type="EMBL" id="AP008971">
    <property type="protein sequence ID" value="BAG08160.1"/>
    <property type="molecule type" value="Genomic_DNA"/>
</dbReference>
<dbReference type="RefSeq" id="WP_002838381.1">
    <property type="nucleotide sequence ID" value="NC_010376.1"/>
</dbReference>
<dbReference type="SMR" id="B0S1C0"/>
<dbReference type="STRING" id="334413.FMG_0742"/>
<dbReference type="KEGG" id="fma:FMG_0742"/>
<dbReference type="eggNOG" id="COG0621">
    <property type="taxonomic scope" value="Bacteria"/>
</dbReference>
<dbReference type="HOGENOM" id="CLU_018697_2_0_9"/>
<dbReference type="Proteomes" id="UP000001319">
    <property type="component" value="Chromosome"/>
</dbReference>
<dbReference type="GO" id="GO:0005829">
    <property type="term" value="C:cytosol"/>
    <property type="evidence" value="ECO:0007669"/>
    <property type="project" value="TreeGrafter"/>
</dbReference>
<dbReference type="GO" id="GO:0051539">
    <property type="term" value="F:4 iron, 4 sulfur cluster binding"/>
    <property type="evidence" value="ECO:0007669"/>
    <property type="project" value="UniProtKB-UniRule"/>
</dbReference>
<dbReference type="GO" id="GO:0046872">
    <property type="term" value="F:metal ion binding"/>
    <property type="evidence" value="ECO:0007669"/>
    <property type="project" value="UniProtKB-KW"/>
</dbReference>
<dbReference type="GO" id="GO:0035597">
    <property type="term" value="F:N6-isopentenyladenosine methylthiotransferase activity"/>
    <property type="evidence" value="ECO:0007669"/>
    <property type="project" value="TreeGrafter"/>
</dbReference>
<dbReference type="CDD" id="cd01335">
    <property type="entry name" value="Radical_SAM"/>
    <property type="match status" value="1"/>
</dbReference>
<dbReference type="FunFam" id="3.40.50.12160:FF:000003">
    <property type="entry name" value="CDK5 regulatory subunit-associated protein 1"/>
    <property type="match status" value="1"/>
</dbReference>
<dbReference type="FunFam" id="3.80.30.20:FF:000001">
    <property type="entry name" value="tRNA-2-methylthio-N(6)-dimethylallyladenosine synthase 2"/>
    <property type="match status" value="1"/>
</dbReference>
<dbReference type="Gene3D" id="3.40.50.12160">
    <property type="entry name" value="Methylthiotransferase, N-terminal domain"/>
    <property type="match status" value="1"/>
</dbReference>
<dbReference type="Gene3D" id="3.80.30.20">
    <property type="entry name" value="tm_1862 like domain"/>
    <property type="match status" value="1"/>
</dbReference>
<dbReference type="HAMAP" id="MF_01864">
    <property type="entry name" value="tRNA_metthiotr_MiaB"/>
    <property type="match status" value="1"/>
</dbReference>
<dbReference type="InterPro" id="IPR006638">
    <property type="entry name" value="Elp3/MiaA/NifB-like_rSAM"/>
</dbReference>
<dbReference type="InterPro" id="IPR005839">
    <property type="entry name" value="Methylthiotransferase"/>
</dbReference>
<dbReference type="InterPro" id="IPR020612">
    <property type="entry name" value="Methylthiotransferase_CS"/>
</dbReference>
<dbReference type="InterPro" id="IPR013848">
    <property type="entry name" value="Methylthiotransferase_N"/>
</dbReference>
<dbReference type="InterPro" id="IPR038135">
    <property type="entry name" value="Methylthiotransferase_N_sf"/>
</dbReference>
<dbReference type="InterPro" id="IPR006463">
    <property type="entry name" value="MiaB_methiolase"/>
</dbReference>
<dbReference type="InterPro" id="IPR007197">
    <property type="entry name" value="rSAM"/>
</dbReference>
<dbReference type="InterPro" id="IPR023404">
    <property type="entry name" value="rSAM_horseshoe"/>
</dbReference>
<dbReference type="InterPro" id="IPR002792">
    <property type="entry name" value="TRAM_dom"/>
</dbReference>
<dbReference type="NCBIfam" id="TIGR01574">
    <property type="entry name" value="miaB-methiolase"/>
    <property type="match status" value="1"/>
</dbReference>
<dbReference type="NCBIfam" id="TIGR00089">
    <property type="entry name" value="MiaB/RimO family radical SAM methylthiotransferase"/>
    <property type="match status" value="1"/>
</dbReference>
<dbReference type="PANTHER" id="PTHR43020">
    <property type="entry name" value="CDK5 REGULATORY SUBUNIT-ASSOCIATED PROTEIN 1"/>
    <property type="match status" value="1"/>
</dbReference>
<dbReference type="PANTHER" id="PTHR43020:SF2">
    <property type="entry name" value="MITOCHONDRIAL TRNA METHYLTHIOTRANSFERASE CDK5RAP1"/>
    <property type="match status" value="1"/>
</dbReference>
<dbReference type="Pfam" id="PF04055">
    <property type="entry name" value="Radical_SAM"/>
    <property type="match status" value="1"/>
</dbReference>
<dbReference type="Pfam" id="PF01938">
    <property type="entry name" value="TRAM"/>
    <property type="match status" value="1"/>
</dbReference>
<dbReference type="Pfam" id="PF00919">
    <property type="entry name" value="UPF0004"/>
    <property type="match status" value="1"/>
</dbReference>
<dbReference type="SFLD" id="SFLDF00273">
    <property type="entry name" value="(dimethylallyl)adenosine_tRNA"/>
    <property type="match status" value="1"/>
</dbReference>
<dbReference type="SFLD" id="SFLDG01082">
    <property type="entry name" value="B12-binding_domain_containing"/>
    <property type="match status" value="1"/>
</dbReference>
<dbReference type="SFLD" id="SFLDS00029">
    <property type="entry name" value="Radical_SAM"/>
    <property type="match status" value="1"/>
</dbReference>
<dbReference type="SMART" id="SM00729">
    <property type="entry name" value="Elp3"/>
    <property type="match status" value="1"/>
</dbReference>
<dbReference type="SUPFAM" id="SSF102114">
    <property type="entry name" value="Radical SAM enzymes"/>
    <property type="match status" value="1"/>
</dbReference>
<dbReference type="PROSITE" id="PS51449">
    <property type="entry name" value="MTTASE_N"/>
    <property type="match status" value="1"/>
</dbReference>
<dbReference type="PROSITE" id="PS01278">
    <property type="entry name" value="MTTASE_RADICAL"/>
    <property type="match status" value="1"/>
</dbReference>
<dbReference type="PROSITE" id="PS51918">
    <property type="entry name" value="RADICAL_SAM"/>
    <property type="match status" value="1"/>
</dbReference>
<dbReference type="PROSITE" id="PS50926">
    <property type="entry name" value="TRAM"/>
    <property type="match status" value="1"/>
</dbReference>
<organism>
    <name type="scientific">Finegoldia magna (strain ATCC 29328 / DSM 20472 / WAL 2508)</name>
    <name type="common">Peptostreptococcus magnus</name>
    <dbReference type="NCBI Taxonomy" id="334413"/>
    <lineage>
        <taxon>Bacteria</taxon>
        <taxon>Bacillati</taxon>
        <taxon>Bacillota</taxon>
        <taxon>Tissierellia</taxon>
        <taxon>Tissierellales</taxon>
        <taxon>Peptoniphilaceae</taxon>
        <taxon>Finegoldia</taxon>
    </lineage>
</organism>
<gene>
    <name evidence="1" type="primary">miaB</name>
    <name type="ordered locus">FMG_0742</name>
</gene>
<protein>
    <recommendedName>
        <fullName evidence="1">tRNA-2-methylthio-N(6)-dimethylallyladenosine synthase</fullName>
        <ecNumber evidence="1">2.8.4.3</ecNumber>
    </recommendedName>
    <alternativeName>
        <fullName evidence="1">(Dimethylallyl)adenosine tRNA methylthiotransferase MiaB</fullName>
    </alternativeName>
    <alternativeName>
        <fullName evidence="1">tRNA-i(6)A37 methylthiotransferase</fullName>
    </alternativeName>
</protein>
<accession>B0S1C0</accession>
<name>MIAB_FINM2</name>
<sequence length="461" mass="52896">MEENNDKLATNSYVNLFINRHEHAPTYSIITHGCQMNEHDSEKIKTLLENMGFEKSDEKLDADFIIFNTCLVRENAEMKVYGQLGALKNLKRENPDMLIAVCGCMMQTGPARDIIREKYPQVDIVFGVNNINSLPYLIDRHLSSGKLVVDIERKDDIDEDITIKRDNEYVGYVNIMTGCNNFCTYCIVPYARGREQSRSVESILSEVKRMVDQGYKDITLLGQNVNSYGKTLENPVTFTELLTKVNDVEGLERLRFLTSHPKDISDELIEAMGKLDKVCENIHLPFQAGSNSVLERMHRRYTKESYLEKVEKLKKSVKGITFSTDIIVGFPGETEEDFQDTLDVVRKVGYEQAFTFKYNRRPGTKADLFEDQVDEDVKQDRLERLLDVAYPIFYEKNKSYLGTIQEVLIEGESKNNPEVMTGRTRTFKLVNVKCDKSYIGKLVNTKIVDFNSFALTGEMVD</sequence>
<comment type="function">
    <text evidence="1">Catalyzes the methylthiolation of N6-(dimethylallyl)adenosine (i(6)A), leading to the formation of 2-methylthio-N6-(dimethylallyl)adenosine (ms(2)i(6)A) at position 37 in tRNAs that read codons beginning with uridine.</text>
</comment>
<comment type="catalytic activity">
    <reaction evidence="1">
        <text>N(6)-dimethylallyladenosine(37) in tRNA + (sulfur carrier)-SH + AH2 + 2 S-adenosyl-L-methionine = 2-methylsulfanyl-N(6)-dimethylallyladenosine(37) in tRNA + (sulfur carrier)-H + 5'-deoxyadenosine + L-methionine + A + S-adenosyl-L-homocysteine + 2 H(+)</text>
        <dbReference type="Rhea" id="RHEA:37067"/>
        <dbReference type="Rhea" id="RHEA-COMP:10375"/>
        <dbReference type="Rhea" id="RHEA-COMP:10376"/>
        <dbReference type="Rhea" id="RHEA-COMP:14737"/>
        <dbReference type="Rhea" id="RHEA-COMP:14739"/>
        <dbReference type="ChEBI" id="CHEBI:13193"/>
        <dbReference type="ChEBI" id="CHEBI:15378"/>
        <dbReference type="ChEBI" id="CHEBI:17319"/>
        <dbReference type="ChEBI" id="CHEBI:17499"/>
        <dbReference type="ChEBI" id="CHEBI:29917"/>
        <dbReference type="ChEBI" id="CHEBI:57844"/>
        <dbReference type="ChEBI" id="CHEBI:57856"/>
        <dbReference type="ChEBI" id="CHEBI:59789"/>
        <dbReference type="ChEBI" id="CHEBI:64428"/>
        <dbReference type="ChEBI" id="CHEBI:74415"/>
        <dbReference type="ChEBI" id="CHEBI:74417"/>
        <dbReference type="EC" id="2.8.4.3"/>
    </reaction>
</comment>
<comment type="cofactor">
    <cofactor evidence="1">
        <name>[4Fe-4S] cluster</name>
        <dbReference type="ChEBI" id="CHEBI:49883"/>
    </cofactor>
    <text evidence="1">Binds 2 [4Fe-4S] clusters. One cluster is coordinated with 3 cysteines and an exchangeable S-adenosyl-L-methionine.</text>
</comment>
<comment type="subunit">
    <text evidence="1">Monomer.</text>
</comment>
<comment type="subcellular location">
    <subcellularLocation>
        <location evidence="1">Cytoplasm</location>
    </subcellularLocation>
</comment>
<comment type="similarity">
    <text evidence="1">Belongs to the methylthiotransferase family. MiaB subfamily.</text>
</comment>